<organism>
    <name type="scientific">Saccharomyces cerevisiae (strain ATCC 204508 / S288c)</name>
    <name type="common">Baker's yeast</name>
    <dbReference type="NCBI Taxonomy" id="559292"/>
    <lineage>
        <taxon>Eukaryota</taxon>
        <taxon>Fungi</taxon>
        <taxon>Dikarya</taxon>
        <taxon>Ascomycota</taxon>
        <taxon>Saccharomycotina</taxon>
        <taxon>Saccharomycetes</taxon>
        <taxon>Saccharomycetales</taxon>
        <taxon>Saccharomycetaceae</taxon>
        <taxon>Saccharomyces</taxon>
    </lineage>
</organism>
<comment type="catalytic activity">
    <reaction>
        <text>tRNA(Arg) + L-arginine + ATP = L-arginyl-tRNA(Arg) + AMP + diphosphate</text>
        <dbReference type="Rhea" id="RHEA:20301"/>
        <dbReference type="Rhea" id="RHEA-COMP:9658"/>
        <dbReference type="Rhea" id="RHEA-COMP:9673"/>
        <dbReference type="ChEBI" id="CHEBI:30616"/>
        <dbReference type="ChEBI" id="CHEBI:32682"/>
        <dbReference type="ChEBI" id="CHEBI:33019"/>
        <dbReference type="ChEBI" id="CHEBI:78442"/>
        <dbReference type="ChEBI" id="CHEBI:78513"/>
        <dbReference type="ChEBI" id="CHEBI:456215"/>
        <dbReference type="EC" id="6.1.1.19"/>
    </reaction>
</comment>
<comment type="subcellular location">
    <subcellularLocation>
        <location>Mitochondrion matrix</location>
    </subcellularLocation>
</comment>
<comment type="similarity">
    <text evidence="2">Belongs to the class-I aminoacyl-tRNA synthetase family.</text>
</comment>
<protein>
    <recommendedName>
        <fullName>Arginine--tRNA ligase, mitochondrial</fullName>
        <ecNumber>6.1.1.19</ecNumber>
    </recommendedName>
    <alternativeName>
        <fullName>Arginyl-tRNA synthetase</fullName>
        <shortName>ArgRS</shortName>
    </alternativeName>
</protein>
<sequence>MFGIVYLKNRSLLCKNPFSSYPRYGFMPSFDTQFSNQFRKLEINIGRKRYSSKTLNTKYTDQPEGPIYPLDVLRLDISKALHDISGIDHSLILNALESTNSMDRGDLLLPLPKIKVADPVAVANRWAIELSTHGCIGKVCAKGPFLQFFLDQRYLIQSTVPNILLQKGKYGQKKSRHQKKVVVEFSSPNIAKPFHAGHLRSTIIGGFLSNLYEAMGWSVTRMNYLGDWGRQFGLLAVGFKRYGDEKTLQKQPIQHLFDVYVKINMDLAKEEINGNSKCGISGEARSFFKNLENGDENAIKIWNRFRSLSIHHYIQTYSRLNINFDIFSGESQVSKESMNEALDIFRKNNLVKEIDGALVIDLTQWSKRLGRVVVQKSDGTTLYLTRDVGAAIERKKNLHFDKMVYVISSQQDLYMSQFFMILKKMNFEWAKDLQHINFGMVQGMSTRKGNVVFLDTILDEARDKALQIMENNKMKISQVDNPQRVADLIGVSAIIIQDMKSKRINNYEFNWNRMLSFEGDTGPYLQYTHSRLRSLERTSSDFTTDMLIHADFSNLNEPQLVELVRLLAQYPDVLRRAFETQEPATIVTYLFKVCHQVSSCYKKIWVSGKPADIAIPRLAVYSASRQVLHNAMSLLGLVPVDRM</sequence>
<proteinExistence type="inferred from homology"/>
<accession>P38714</accession>
<accession>D3DL43</accession>
<name>SYRM_YEAST</name>
<evidence type="ECO:0000255" key="1"/>
<evidence type="ECO:0000305" key="2"/>
<gene>
    <name type="primary">MSR1</name>
    <name type="ordered locus">YHR091C</name>
</gene>
<feature type="transit peptide" description="Mitochondrion" evidence="1">
    <location>
        <begin position="1"/>
        <end status="unknown"/>
    </location>
</feature>
<feature type="chain" id="PRO_0000035799" description="Arginine--tRNA ligase, mitochondrial">
    <location>
        <begin status="unknown"/>
        <end position="643"/>
    </location>
</feature>
<feature type="short sequence motif" description="'HIGH' region">
    <location>
        <begin position="188"/>
        <end position="198"/>
    </location>
</feature>
<feature type="sequence conflict" description="In Ref. 1; AAA61486." evidence="2" ref="1">
    <original>M</original>
    <variation>T</variation>
    <location>
        <position position="499"/>
    </location>
</feature>
<reference key="1">
    <citation type="submission" date="1995-01" db="EMBL/GenBank/DDBJ databases">
        <title>Yeast MSR1 gene.</title>
        <authorList>
            <person name="Tzagoloff A.A."/>
            <person name="Shtanko A."/>
        </authorList>
    </citation>
    <scope>NUCLEOTIDE SEQUENCE [GENOMIC DNA]</scope>
    <source>
        <strain>ATCC 24657 / D273-10B</strain>
    </source>
</reference>
<reference key="2">
    <citation type="journal article" date="1994" name="Science">
        <title>Complete nucleotide sequence of Saccharomyces cerevisiae chromosome VIII.</title>
        <authorList>
            <person name="Johnston M."/>
            <person name="Andrews S."/>
            <person name="Brinkman R."/>
            <person name="Cooper J."/>
            <person name="Ding H."/>
            <person name="Dover J."/>
            <person name="Du Z."/>
            <person name="Favello A."/>
            <person name="Fulton L."/>
            <person name="Gattung S."/>
            <person name="Geisel C."/>
            <person name="Kirsten J."/>
            <person name="Kucaba T."/>
            <person name="Hillier L.W."/>
            <person name="Jier M."/>
            <person name="Johnston L."/>
            <person name="Langston Y."/>
            <person name="Latreille P."/>
            <person name="Louis E.J."/>
            <person name="Macri C."/>
            <person name="Mardis E."/>
            <person name="Menezes S."/>
            <person name="Mouser L."/>
            <person name="Nhan M."/>
            <person name="Rifkin L."/>
            <person name="Riles L."/>
            <person name="St Peter H."/>
            <person name="Trevaskis E."/>
            <person name="Vaughan K."/>
            <person name="Vignati D."/>
            <person name="Wilcox L."/>
            <person name="Wohldman P."/>
            <person name="Waterston R."/>
            <person name="Wilson R."/>
            <person name="Vaudin M."/>
        </authorList>
    </citation>
    <scope>NUCLEOTIDE SEQUENCE [LARGE SCALE GENOMIC DNA]</scope>
    <source>
        <strain>ATCC 204508 / S288c</strain>
    </source>
</reference>
<reference key="3">
    <citation type="journal article" date="2014" name="G3 (Bethesda)">
        <title>The reference genome sequence of Saccharomyces cerevisiae: Then and now.</title>
        <authorList>
            <person name="Engel S.R."/>
            <person name="Dietrich F.S."/>
            <person name="Fisk D.G."/>
            <person name="Binkley G."/>
            <person name="Balakrishnan R."/>
            <person name="Costanzo M.C."/>
            <person name="Dwight S.S."/>
            <person name="Hitz B.C."/>
            <person name="Karra K."/>
            <person name="Nash R.S."/>
            <person name="Weng S."/>
            <person name="Wong E.D."/>
            <person name="Lloyd P."/>
            <person name="Skrzypek M.S."/>
            <person name="Miyasato S.R."/>
            <person name="Simison M."/>
            <person name="Cherry J.M."/>
        </authorList>
    </citation>
    <scope>GENOME REANNOTATION</scope>
    <source>
        <strain>ATCC 204508 / S288c</strain>
    </source>
</reference>
<dbReference type="EC" id="6.1.1.19"/>
<dbReference type="EMBL" id="L39019">
    <property type="protein sequence ID" value="AAA61486.1"/>
    <property type="molecule type" value="Genomic_DNA"/>
</dbReference>
<dbReference type="EMBL" id="U00060">
    <property type="protein sequence ID" value="AAB68931.1"/>
    <property type="molecule type" value="Genomic_DNA"/>
</dbReference>
<dbReference type="EMBL" id="BK006934">
    <property type="protein sequence ID" value="DAA06787.1"/>
    <property type="molecule type" value="Genomic_DNA"/>
</dbReference>
<dbReference type="PIR" id="S46723">
    <property type="entry name" value="S46723"/>
</dbReference>
<dbReference type="RefSeq" id="NP_011959.1">
    <property type="nucleotide sequence ID" value="NM_001179221.1"/>
</dbReference>
<dbReference type="SMR" id="P38714"/>
<dbReference type="BioGRID" id="36526">
    <property type="interactions" value="15"/>
</dbReference>
<dbReference type="DIP" id="DIP-1452N"/>
<dbReference type="FunCoup" id="P38714">
    <property type="interactions" value="937"/>
</dbReference>
<dbReference type="IntAct" id="P38714">
    <property type="interactions" value="2"/>
</dbReference>
<dbReference type="MINT" id="P38714"/>
<dbReference type="STRING" id="4932.YHR091C"/>
<dbReference type="PaxDb" id="4932-YHR091C"/>
<dbReference type="PeptideAtlas" id="P38714"/>
<dbReference type="EnsemblFungi" id="YHR091C_mRNA">
    <property type="protein sequence ID" value="YHR091C"/>
    <property type="gene ID" value="YHR091C"/>
</dbReference>
<dbReference type="GeneID" id="856491"/>
<dbReference type="KEGG" id="sce:YHR091C"/>
<dbReference type="AGR" id="SGD:S000001133"/>
<dbReference type="SGD" id="S000001133">
    <property type="gene designation" value="MSR1"/>
</dbReference>
<dbReference type="VEuPathDB" id="FungiDB:YHR091C"/>
<dbReference type="eggNOG" id="KOG1195">
    <property type="taxonomic scope" value="Eukaryota"/>
</dbReference>
<dbReference type="GeneTree" id="ENSGT00530000063407"/>
<dbReference type="HOGENOM" id="CLU_006406_6_2_1"/>
<dbReference type="InParanoid" id="P38714"/>
<dbReference type="OMA" id="VANRWAI"/>
<dbReference type="OrthoDB" id="68056at2759"/>
<dbReference type="BioCyc" id="YEAST:G3O-31138-MONOMER"/>
<dbReference type="BioGRID-ORCS" id="856491">
    <property type="hits" value="3 hits in 10 CRISPR screens"/>
</dbReference>
<dbReference type="PRO" id="PR:P38714"/>
<dbReference type="Proteomes" id="UP000002311">
    <property type="component" value="Chromosome VIII"/>
</dbReference>
<dbReference type="RNAct" id="P38714">
    <property type="molecule type" value="protein"/>
</dbReference>
<dbReference type="GO" id="GO:0005759">
    <property type="term" value="C:mitochondrial matrix"/>
    <property type="evidence" value="ECO:0007669"/>
    <property type="project" value="UniProtKB-SubCell"/>
</dbReference>
<dbReference type="GO" id="GO:0005739">
    <property type="term" value="C:mitochondrion"/>
    <property type="evidence" value="ECO:0000315"/>
    <property type="project" value="SGD"/>
</dbReference>
<dbReference type="GO" id="GO:0004814">
    <property type="term" value="F:arginine-tRNA ligase activity"/>
    <property type="evidence" value="ECO:0000247"/>
    <property type="project" value="SGD"/>
</dbReference>
<dbReference type="GO" id="GO:0005524">
    <property type="term" value="F:ATP binding"/>
    <property type="evidence" value="ECO:0007669"/>
    <property type="project" value="UniProtKB-KW"/>
</dbReference>
<dbReference type="GO" id="GO:0006420">
    <property type="term" value="P:arginyl-tRNA aminoacylation"/>
    <property type="evidence" value="ECO:0000247"/>
    <property type="project" value="SGD"/>
</dbReference>
<dbReference type="GO" id="GO:0070144">
    <property type="term" value="P:mitochondrial arginyl-tRNA aminoacylation"/>
    <property type="evidence" value="ECO:0000305"/>
    <property type="project" value="SGD"/>
</dbReference>
<dbReference type="GO" id="GO:0032543">
    <property type="term" value="P:mitochondrial translation"/>
    <property type="evidence" value="ECO:0000315"/>
    <property type="project" value="SGD"/>
</dbReference>
<dbReference type="CDD" id="cd07956">
    <property type="entry name" value="Anticodon_Ia_Arg"/>
    <property type="match status" value="1"/>
</dbReference>
<dbReference type="CDD" id="cd00671">
    <property type="entry name" value="ArgRS_core"/>
    <property type="match status" value="1"/>
</dbReference>
<dbReference type="FunFam" id="1.10.730.10:FF:000006">
    <property type="entry name" value="Arginyl-tRNA synthetase 2, mitochondrial"/>
    <property type="match status" value="1"/>
</dbReference>
<dbReference type="FunFam" id="3.40.50.620:FF:000058">
    <property type="entry name" value="Mitochondrial arginyl-tRNA synthetase"/>
    <property type="match status" value="1"/>
</dbReference>
<dbReference type="Gene3D" id="3.30.1360.70">
    <property type="entry name" value="Arginyl tRNA synthetase N-terminal domain"/>
    <property type="match status" value="1"/>
</dbReference>
<dbReference type="Gene3D" id="3.40.50.620">
    <property type="entry name" value="HUPs"/>
    <property type="match status" value="1"/>
</dbReference>
<dbReference type="Gene3D" id="1.10.730.10">
    <property type="entry name" value="Isoleucyl-tRNA Synthetase, Domain 1"/>
    <property type="match status" value="1"/>
</dbReference>
<dbReference type="InterPro" id="IPR001412">
    <property type="entry name" value="aa-tRNA-synth_I_CS"/>
</dbReference>
<dbReference type="InterPro" id="IPR001278">
    <property type="entry name" value="Arg-tRNA-ligase"/>
</dbReference>
<dbReference type="InterPro" id="IPR005148">
    <property type="entry name" value="Arg-tRNA-synth_N"/>
</dbReference>
<dbReference type="InterPro" id="IPR036695">
    <property type="entry name" value="Arg-tRNA-synth_N_sf"/>
</dbReference>
<dbReference type="InterPro" id="IPR035684">
    <property type="entry name" value="ArgRS_core"/>
</dbReference>
<dbReference type="InterPro" id="IPR008909">
    <property type="entry name" value="DALR_anticod-bd"/>
</dbReference>
<dbReference type="InterPro" id="IPR014729">
    <property type="entry name" value="Rossmann-like_a/b/a_fold"/>
</dbReference>
<dbReference type="InterPro" id="IPR009080">
    <property type="entry name" value="tRNAsynth_Ia_anticodon-bd"/>
</dbReference>
<dbReference type="NCBIfam" id="TIGR00456">
    <property type="entry name" value="argS"/>
    <property type="match status" value="1"/>
</dbReference>
<dbReference type="PANTHER" id="PTHR11956:SF11">
    <property type="entry name" value="ARGININE--TRNA LIGASE, MITOCHONDRIAL-RELATED"/>
    <property type="match status" value="1"/>
</dbReference>
<dbReference type="PANTHER" id="PTHR11956">
    <property type="entry name" value="ARGINYL-TRNA SYNTHETASE"/>
    <property type="match status" value="1"/>
</dbReference>
<dbReference type="Pfam" id="PF03485">
    <property type="entry name" value="Arg_tRNA_synt_N"/>
    <property type="match status" value="1"/>
</dbReference>
<dbReference type="Pfam" id="PF05746">
    <property type="entry name" value="DALR_1"/>
    <property type="match status" value="1"/>
</dbReference>
<dbReference type="Pfam" id="PF00750">
    <property type="entry name" value="tRNA-synt_1d"/>
    <property type="match status" value="1"/>
</dbReference>
<dbReference type="PRINTS" id="PR01038">
    <property type="entry name" value="TRNASYNTHARG"/>
</dbReference>
<dbReference type="SMART" id="SM01016">
    <property type="entry name" value="Arg_tRNA_synt_N"/>
    <property type="match status" value="1"/>
</dbReference>
<dbReference type="SMART" id="SM00836">
    <property type="entry name" value="DALR_1"/>
    <property type="match status" value="1"/>
</dbReference>
<dbReference type="SUPFAM" id="SSF47323">
    <property type="entry name" value="Anticodon-binding domain of a subclass of class I aminoacyl-tRNA synthetases"/>
    <property type="match status" value="1"/>
</dbReference>
<dbReference type="SUPFAM" id="SSF55190">
    <property type="entry name" value="Arginyl-tRNA synthetase (ArgRS), N-terminal 'additional' domain"/>
    <property type="match status" value="1"/>
</dbReference>
<dbReference type="SUPFAM" id="SSF52374">
    <property type="entry name" value="Nucleotidylyl transferase"/>
    <property type="match status" value="1"/>
</dbReference>
<dbReference type="PROSITE" id="PS00178">
    <property type="entry name" value="AA_TRNA_LIGASE_I"/>
    <property type="match status" value="1"/>
</dbReference>
<keyword id="KW-0030">Aminoacyl-tRNA synthetase</keyword>
<keyword id="KW-0067">ATP-binding</keyword>
<keyword id="KW-0436">Ligase</keyword>
<keyword id="KW-0496">Mitochondrion</keyword>
<keyword id="KW-0547">Nucleotide-binding</keyword>
<keyword id="KW-0648">Protein biosynthesis</keyword>
<keyword id="KW-1185">Reference proteome</keyword>
<keyword id="KW-0809">Transit peptide</keyword>